<organism>
    <name type="scientific">Rattus norvegicus</name>
    <name type="common">Rat</name>
    <dbReference type="NCBI Taxonomy" id="10116"/>
    <lineage>
        <taxon>Eukaryota</taxon>
        <taxon>Metazoa</taxon>
        <taxon>Chordata</taxon>
        <taxon>Craniata</taxon>
        <taxon>Vertebrata</taxon>
        <taxon>Euteleostomi</taxon>
        <taxon>Mammalia</taxon>
        <taxon>Eutheria</taxon>
        <taxon>Euarchontoglires</taxon>
        <taxon>Glires</taxon>
        <taxon>Rodentia</taxon>
        <taxon>Myomorpha</taxon>
        <taxon>Muroidea</taxon>
        <taxon>Muridae</taxon>
        <taxon>Murinae</taxon>
        <taxon>Rattus</taxon>
    </lineage>
</organism>
<accession>P41237</accession>
<comment type="function">
    <text>May mediate extracellular or intracellular signaling of cortical neurons during forebrain development.</text>
</comment>
<comment type="subcellular location">
    <subcellularLocation>
        <location evidence="3">Membrane</location>
        <topology evidence="3">Single-pass membrane protein</topology>
    </subcellularLocation>
</comment>
<comment type="tissue specificity">
    <text>Neuron specific.</text>
</comment>
<comment type="similarity">
    <text evidence="3">Belongs to the cortexin family.</text>
</comment>
<protein>
    <recommendedName>
        <fullName>Cortexin-1</fullName>
    </recommendedName>
</protein>
<keyword id="KW-0472">Membrane</keyword>
<keyword id="KW-1185">Reference proteome</keyword>
<keyword id="KW-0812">Transmembrane</keyword>
<keyword id="KW-1133">Transmembrane helix</keyword>
<name>CTXN1_RAT</name>
<dbReference type="EMBL" id="L15011">
    <property type="status" value="NOT_ANNOTATED_CDS"/>
    <property type="molecule type" value="mRNA"/>
</dbReference>
<dbReference type="PIR" id="JH0814">
    <property type="entry name" value="JH0814"/>
</dbReference>
<dbReference type="RefSeq" id="NP_001103405.1">
    <property type="nucleotide sequence ID" value="NM_001109935.1"/>
</dbReference>
<dbReference type="SMR" id="P41237"/>
<dbReference type="FunCoup" id="P41237">
    <property type="interactions" value="452"/>
</dbReference>
<dbReference type="STRING" id="10116.ENSRNOP00000001399"/>
<dbReference type="PhosphoSitePlus" id="P41237"/>
<dbReference type="PaxDb" id="10116-ENSRNOP00000001399"/>
<dbReference type="GeneID" id="29145"/>
<dbReference type="KEGG" id="rno:29145"/>
<dbReference type="UCSC" id="RGD:2449">
    <property type="organism name" value="rat"/>
</dbReference>
<dbReference type="AGR" id="RGD:2449"/>
<dbReference type="CTD" id="404217"/>
<dbReference type="RGD" id="2449">
    <property type="gene designation" value="Ctxn1"/>
</dbReference>
<dbReference type="eggNOG" id="ENOG502S3S8">
    <property type="taxonomic scope" value="Eukaryota"/>
</dbReference>
<dbReference type="HOGENOM" id="CLU_193122_0_0_1"/>
<dbReference type="InParanoid" id="P41237"/>
<dbReference type="PhylomeDB" id="P41237"/>
<dbReference type="TreeFam" id="TF333403"/>
<dbReference type="PRO" id="PR:P41237"/>
<dbReference type="Proteomes" id="UP000002494">
    <property type="component" value="Chromosome 12"/>
</dbReference>
<dbReference type="Bgee" id="ENSRNOG00000001057">
    <property type="expression patterns" value="Expressed in frontal cortex and 19 other cell types or tissues"/>
</dbReference>
<dbReference type="GO" id="GO:0016020">
    <property type="term" value="C:membrane"/>
    <property type="evidence" value="ECO:0007669"/>
    <property type="project" value="UniProtKB-SubCell"/>
</dbReference>
<dbReference type="InterPro" id="IPR020066">
    <property type="entry name" value="Cortexin"/>
</dbReference>
<dbReference type="PANTHER" id="PTHR16736:SF3">
    <property type="entry name" value="CORTEXIN-1"/>
    <property type="match status" value="1"/>
</dbReference>
<dbReference type="PANTHER" id="PTHR16736">
    <property type="entry name" value="CORTEXIN-1-RELATED"/>
    <property type="match status" value="1"/>
</dbReference>
<dbReference type="Pfam" id="PF11057">
    <property type="entry name" value="Cortexin"/>
    <property type="match status" value="1"/>
</dbReference>
<gene>
    <name type="primary">Ctxn1</name>
    <name type="synonym">Ctxn</name>
</gene>
<proteinExistence type="evidence at transcript level"/>
<sequence length="82" mass="9069">MSAPWTLSPEPLPPSTGPPVGAGLDVEQRTVFAFVLCLLVVLVLLMVRCVRILLDPYSRMPASSWTDHKEALERGQFDYALV</sequence>
<reference key="1">
    <citation type="journal article" date="1993" name="J. Neurochem.">
        <title>Identification of cortexin: a novel, neuron-specific, 82-residue membrane protein enriched in rodent cerebral cortex.</title>
        <authorList>
            <person name="Coulter P.M. II"/>
            <person name="Bautista E.A."/>
            <person name="Margulies J.E."/>
            <person name="Watson J.B."/>
        </authorList>
    </citation>
    <scope>NUCLEOTIDE SEQUENCE [MRNA]</scope>
    <source>
        <tissue>Brain</tissue>
    </source>
</reference>
<evidence type="ECO:0000255" key="1"/>
<evidence type="ECO:0000256" key="2">
    <source>
        <dbReference type="SAM" id="MobiDB-lite"/>
    </source>
</evidence>
<evidence type="ECO:0000305" key="3"/>
<feature type="chain" id="PRO_0000079502" description="Cortexin-1">
    <location>
        <begin position="1"/>
        <end position="82"/>
    </location>
</feature>
<feature type="transmembrane region" description="Helical" evidence="1">
    <location>
        <begin position="30"/>
        <end position="50"/>
    </location>
</feature>
<feature type="region of interest" description="Disordered" evidence="2">
    <location>
        <begin position="1"/>
        <end position="20"/>
    </location>
</feature>